<organism>
    <name type="scientific">Burkholderia orbicola (strain MC0-3)</name>
    <dbReference type="NCBI Taxonomy" id="406425"/>
    <lineage>
        <taxon>Bacteria</taxon>
        <taxon>Pseudomonadati</taxon>
        <taxon>Pseudomonadota</taxon>
        <taxon>Betaproteobacteria</taxon>
        <taxon>Burkholderiales</taxon>
        <taxon>Burkholderiaceae</taxon>
        <taxon>Burkholderia</taxon>
        <taxon>Burkholderia cepacia complex</taxon>
        <taxon>Burkholderia orbicola</taxon>
    </lineage>
</organism>
<feature type="chain" id="PRO_1000090968" description="Aspartate--tRNA(Asp/Asn) ligase">
    <location>
        <begin position="1"/>
        <end position="600"/>
    </location>
</feature>
<feature type="region of interest" description="Aspartate" evidence="1">
    <location>
        <begin position="198"/>
        <end position="201"/>
    </location>
</feature>
<feature type="binding site" evidence="1">
    <location>
        <position position="174"/>
    </location>
    <ligand>
        <name>L-aspartate</name>
        <dbReference type="ChEBI" id="CHEBI:29991"/>
    </ligand>
</feature>
<feature type="binding site" evidence="1">
    <location>
        <begin position="220"/>
        <end position="222"/>
    </location>
    <ligand>
        <name>ATP</name>
        <dbReference type="ChEBI" id="CHEBI:30616"/>
    </ligand>
</feature>
<feature type="binding site" evidence="1">
    <location>
        <position position="220"/>
    </location>
    <ligand>
        <name>L-aspartate</name>
        <dbReference type="ChEBI" id="CHEBI:29991"/>
    </ligand>
</feature>
<feature type="binding site" evidence="1">
    <location>
        <position position="229"/>
    </location>
    <ligand>
        <name>ATP</name>
        <dbReference type="ChEBI" id="CHEBI:30616"/>
    </ligand>
</feature>
<feature type="binding site" evidence="1">
    <location>
        <position position="457"/>
    </location>
    <ligand>
        <name>L-aspartate</name>
        <dbReference type="ChEBI" id="CHEBI:29991"/>
    </ligand>
</feature>
<feature type="binding site" evidence="1">
    <location>
        <position position="491"/>
    </location>
    <ligand>
        <name>ATP</name>
        <dbReference type="ChEBI" id="CHEBI:30616"/>
    </ligand>
</feature>
<feature type="binding site" evidence="1">
    <location>
        <position position="498"/>
    </location>
    <ligand>
        <name>L-aspartate</name>
        <dbReference type="ChEBI" id="CHEBI:29991"/>
    </ligand>
</feature>
<feature type="binding site" evidence="1">
    <location>
        <begin position="543"/>
        <end position="546"/>
    </location>
    <ligand>
        <name>ATP</name>
        <dbReference type="ChEBI" id="CHEBI:30616"/>
    </ligand>
</feature>
<feature type="site" description="Important for tRNA non-discrimination" evidence="1">
    <location>
        <position position="32"/>
    </location>
</feature>
<feature type="site" description="Important for tRNA non-discrimination" evidence="1">
    <location>
        <position position="83"/>
    </location>
</feature>
<sequence>MSMRTEYCGLVTEHLLGQTVSLCGWVQRRRDHGGVIFIDLRDREGLVQVVCDPDRAEMFATAEGVRNEFCVQIKGLVRNRPEGTVNAGLKSGKIEVLCHELNVLNASVTPPFQLDDDNLSETTRLTHRVLDLRRPQMQHNLRLRYRVAIEARKYLDEQGFIDIETPMLTKSTPEGARDYLVPSRVNAGQFFALPQSPQLFKQLLMVANFDRYYQITKCFRDEDLRADRQPEFTQIDCETSFLGEQEIRDLFEDMIRHIFKTTIDVELDAKFPVMPYSEAMARFGSDKPDLRVQLEFTELTDAMKDVDFKVFSTPANAKDGRVAALRVPKGGELSRGDIDGYTEFVRIYGAKGLAWIKVNEKAKGRDGLQSPIVKNLHDASIAAILERTGAEDGDIIFFAADRAKVVNDSLGALRLKIGHSEFGKANGLVQAGWKPLWVVDFPMFEYDDEDARYVAAHHPFTSPKDEHLEYLETDPGRCLAKAYDMVLNGWEIGGGSVRIHREEVQSKVFRALKIGAEEAQLKFGFLLDALQYGAPPHGGIAFGLDRIVTMMAGADSIRDVIAFPKTQRAQDLLTQAPSPVDERQLRELHIRLRQPEQPKA</sequence>
<keyword id="KW-0030">Aminoacyl-tRNA synthetase</keyword>
<keyword id="KW-0067">ATP-binding</keyword>
<keyword id="KW-0963">Cytoplasm</keyword>
<keyword id="KW-0436">Ligase</keyword>
<keyword id="KW-0547">Nucleotide-binding</keyword>
<keyword id="KW-0648">Protein biosynthesis</keyword>
<reference key="1">
    <citation type="submission" date="2008-02" db="EMBL/GenBank/DDBJ databases">
        <title>Complete sequence of chromosome 1 of Burkholderia cenocepacia MC0-3.</title>
        <authorList>
            <person name="Copeland A."/>
            <person name="Lucas S."/>
            <person name="Lapidus A."/>
            <person name="Barry K."/>
            <person name="Bruce D."/>
            <person name="Goodwin L."/>
            <person name="Glavina del Rio T."/>
            <person name="Dalin E."/>
            <person name="Tice H."/>
            <person name="Pitluck S."/>
            <person name="Chain P."/>
            <person name="Malfatti S."/>
            <person name="Shin M."/>
            <person name="Vergez L."/>
            <person name="Schmutz J."/>
            <person name="Larimer F."/>
            <person name="Land M."/>
            <person name="Hauser L."/>
            <person name="Kyrpides N."/>
            <person name="Mikhailova N."/>
            <person name="Tiedje J."/>
            <person name="Richardson P."/>
        </authorList>
    </citation>
    <scope>NUCLEOTIDE SEQUENCE [LARGE SCALE GENOMIC DNA]</scope>
    <source>
        <strain>MC0-3</strain>
    </source>
</reference>
<protein>
    <recommendedName>
        <fullName evidence="1">Aspartate--tRNA(Asp/Asn) ligase</fullName>
        <ecNumber evidence="1">6.1.1.23</ecNumber>
    </recommendedName>
    <alternativeName>
        <fullName evidence="1">Aspartyl-tRNA synthetase</fullName>
        <shortName evidence="1">AspRS</shortName>
    </alternativeName>
    <alternativeName>
        <fullName evidence="1">Non-discriminating aspartyl-tRNA synthetase</fullName>
        <shortName evidence="1">ND-AspRS</shortName>
    </alternativeName>
</protein>
<dbReference type="EC" id="6.1.1.23" evidence="1"/>
<dbReference type="EMBL" id="CP000958">
    <property type="protein sequence ID" value="ACA91912.1"/>
    <property type="molecule type" value="Genomic_DNA"/>
</dbReference>
<dbReference type="RefSeq" id="WP_006477843.1">
    <property type="nucleotide sequence ID" value="NC_010508.1"/>
</dbReference>
<dbReference type="SMR" id="B1JYI9"/>
<dbReference type="GeneID" id="93194203"/>
<dbReference type="KEGG" id="bcm:Bcenmc03_2752"/>
<dbReference type="HOGENOM" id="CLU_014330_3_2_4"/>
<dbReference type="Proteomes" id="UP000002169">
    <property type="component" value="Chromosome 1"/>
</dbReference>
<dbReference type="GO" id="GO:0005737">
    <property type="term" value="C:cytoplasm"/>
    <property type="evidence" value="ECO:0007669"/>
    <property type="project" value="UniProtKB-SubCell"/>
</dbReference>
<dbReference type="GO" id="GO:0004815">
    <property type="term" value="F:aspartate-tRNA ligase activity"/>
    <property type="evidence" value="ECO:0007669"/>
    <property type="project" value="UniProtKB-UniRule"/>
</dbReference>
<dbReference type="GO" id="GO:0050560">
    <property type="term" value="F:aspartate-tRNA(Asn) ligase activity"/>
    <property type="evidence" value="ECO:0007669"/>
    <property type="project" value="UniProtKB-EC"/>
</dbReference>
<dbReference type="GO" id="GO:0005524">
    <property type="term" value="F:ATP binding"/>
    <property type="evidence" value="ECO:0007669"/>
    <property type="project" value="UniProtKB-UniRule"/>
</dbReference>
<dbReference type="GO" id="GO:0003676">
    <property type="term" value="F:nucleic acid binding"/>
    <property type="evidence" value="ECO:0007669"/>
    <property type="project" value="InterPro"/>
</dbReference>
<dbReference type="GO" id="GO:0006422">
    <property type="term" value="P:aspartyl-tRNA aminoacylation"/>
    <property type="evidence" value="ECO:0007669"/>
    <property type="project" value="UniProtKB-UniRule"/>
</dbReference>
<dbReference type="CDD" id="cd00777">
    <property type="entry name" value="AspRS_core"/>
    <property type="match status" value="1"/>
</dbReference>
<dbReference type="CDD" id="cd04317">
    <property type="entry name" value="EcAspRS_like_N"/>
    <property type="match status" value="1"/>
</dbReference>
<dbReference type="Gene3D" id="3.30.930.10">
    <property type="entry name" value="Bira Bifunctional Protein, Domain 2"/>
    <property type="match status" value="1"/>
</dbReference>
<dbReference type="Gene3D" id="3.30.1360.30">
    <property type="entry name" value="GAD-like domain"/>
    <property type="match status" value="1"/>
</dbReference>
<dbReference type="Gene3D" id="2.40.50.140">
    <property type="entry name" value="Nucleic acid-binding proteins"/>
    <property type="match status" value="1"/>
</dbReference>
<dbReference type="HAMAP" id="MF_00044">
    <property type="entry name" value="Asp_tRNA_synth_type1"/>
    <property type="match status" value="1"/>
</dbReference>
<dbReference type="InterPro" id="IPR004364">
    <property type="entry name" value="Aa-tRNA-synt_II"/>
</dbReference>
<dbReference type="InterPro" id="IPR006195">
    <property type="entry name" value="aa-tRNA-synth_II"/>
</dbReference>
<dbReference type="InterPro" id="IPR045864">
    <property type="entry name" value="aa-tRNA-synth_II/BPL/LPL"/>
</dbReference>
<dbReference type="InterPro" id="IPR004524">
    <property type="entry name" value="Asp-tRNA-ligase_1"/>
</dbReference>
<dbReference type="InterPro" id="IPR047089">
    <property type="entry name" value="Asp-tRNA-ligase_1_N"/>
</dbReference>
<dbReference type="InterPro" id="IPR002312">
    <property type="entry name" value="Asp/Asn-tRNA-synth_IIb"/>
</dbReference>
<dbReference type="InterPro" id="IPR047090">
    <property type="entry name" value="AspRS_core"/>
</dbReference>
<dbReference type="InterPro" id="IPR004115">
    <property type="entry name" value="GAD-like_sf"/>
</dbReference>
<dbReference type="InterPro" id="IPR029351">
    <property type="entry name" value="GAD_dom"/>
</dbReference>
<dbReference type="InterPro" id="IPR012340">
    <property type="entry name" value="NA-bd_OB-fold"/>
</dbReference>
<dbReference type="InterPro" id="IPR004365">
    <property type="entry name" value="NA-bd_OB_tRNA"/>
</dbReference>
<dbReference type="NCBIfam" id="TIGR00459">
    <property type="entry name" value="aspS_bact"/>
    <property type="match status" value="1"/>
</dbReference>
<dbReference type="NCBIfam" id="NF001750">
    <property type="entry name" value="PRK00476.1"/>
    <property type="match status" value="1"/>
</dbReference>
<dbReference type="PANTHER" id="PTHR22594:SF5">
    <property type="entry name" value="ASPARTATE--TRNA LIGASE, MITOCHONDRIAL"/>
    <property type="match status" value="1"/>
</dbReference>
<dbReference type="PANTHER" id="PTHR22594">
    <property type="entry name" value="ASPARTYL/LYSYL-TRNA SYNTHETASE"/>
    <property type="match status" value="1"/>
</dbReference>
<dbReference type="Pfam" id="PF02938">
    <property type="entry name" value="GAD"/>
    <property type="match status" value="1"/>
</dbReference>
<dbReference type="Pfam" id="PF00152">
    <property type="entry name" value="tRNA-synt_2"/>
    <property type="match status" value="1"/>
</dbReference>
<dbReference type="Pfam" id="PF01336">
    <property type="entry name" value="tRNA_anti-codon"/>
    <property type="match status" value="1"/>
</dbReference>
<dbReference type="PRINTS" id="PR01042">
    <property type="entry name" value="TRNASYNTHASP"/>
</dbReference>
<dbReference type="SUPFAM" id="SSF55681">
    <property type="entry name" value="Class II aaRS and biotin synthetases"/>
    <property type="match status" value="1"/>
</dbReference>
<dbReference type="SUPFAM" id="SSF55261">
    <property type="entry name" value="GAD domain-like"/>
    <property type="match status" value="1"/>
</dbReference>
<dbReference type="SUPFAM" id="SSF50249">
    <property type="entry name" value="Nucleic acid-binding proteins"/>
    <property type="match status" value="1"/>
</dbReference>
<dbReference type="PROSITE" id="PS50862">
    <property type="entry name" value="AA_TRNA_LIGASE_II"/>
    <property type="match status" value="1"/>
</dbReference>
<proteinExistence type="inferred from homology"/>
<accession>B1JYI9</accession>
<comment type="function">
    <text evidence="1">Aspartyl-tRNA synthetase with relaxed tRNA specificity since it is able to aspartylate not only its cognate tRNA(Asp) but also tRNA(Asn). Reaction proceeds in two steps: L-aspartate is first activated by ATP to form Asp-AMP and then transferred to the acceptor end of tRNA(Asp/Asn).</text>
</comment>
<comment type="catalytic activity">
    <reaction evidence="1">
        <text>tRNA(Asx) + L-aspartate + ATP = L-aspartyl-tRNA(Asx) + AMP + diphosphate</text>
        <dbReference type="Rhea" id="RHEA:18349"/>
        <dbReference type="Rhea" id="RHEA-COMP:9710"/>
        <dbReference type="Rhea" id="RHEA-COMP:9711"/>
        <dbReference type="ChEBI" id="CHEBI:29991"/>
        <dbReference type="ChEBI" id="CHEBI:30616"/>
        <dbReference type="ChEBI" id="CHEBI:33019"/>
        <dbReference type="ChEBI" id="CHEBI:78442"/>
        <dbReference type="ChEBI" id="CHEBI:78516"/>
        <dbReference type="ChEBI" id="CHEBI:456215"/>
        <dbReference type="EC" id="6.1.1.23"/>
    </reaction>
</comment>
<comment type="subunit">
    <text evidence="1">Homodimer.</text>
</comment>
<comment type="subcellular location">
    <subcellularLocation>
        <location evidence="1">Cytoplasm</location>
    </subcellularLocation>
</comment>
<comment type="similarity">
    <text evidence="1">Belongs to the class-II aminoacyl-tRNA synthetase family. Type 1 subfamily.</text>
</comment>
<evidence type="ECO:0000255" key="1">
    <source>
        <dbReference type="HAMAP-Rule" id="MF_00044"/>
    </source>
</evidence>
<gene>
    <name evidence="1" type="primary">aspS</name>
    <name type="ordered locus">Bcenmc03_2752</name>
</gene>
<name>SYDND_BURO0</name>